<dbReference type="EMBL" id="AK014813">
    <property type="protein sequence ID" value="BAB29565.1"/>
    <property type="molecule type" value="mRNA"/>
</dbReference>
<dbReference type="EMBL" id="AK044360">
    <property type="protein sequence ID" value="BAC31884.1"/>
    <property type="molecule type" value="mRNA"/>
</dbReference>
<dbReference type="EMBL" id="AK157352">
    <property type="protein sequence ID" value="BAE34059.1"/>
    <property type="molecule type" value="mRNA"/>
</dbReference>
<dbReference type="EMBL" id="BC052440">
    <property type="protein sequence ID" value="AAH52440.1"/>
    <property type="molecule type" value="mRNA"/>
</dbReference>
<dbReference type="EMBL" id="BC054797">
    <property type="protein sequence ID" value="AAH54797.1"/>
    <property type="molecule type" value="mRNA"/>
</dbReference>
<dbReference type="EMBL" id="BC059230">
    <property type="protein sequence ID" value="AAH59230.1"/>
    <property type="molecule type" value="mRNA"/>
</dbReference>
<dbReference type="EMBL" id="BC138937">
    <property type="protein sequence ID" value="AAI38938.1"/>
    <property type="molecule type" value="mRNA"/>
</dbReference>
<dbReference type="CCDS" id="CCDS26211.1">
    <molecule id="Q3TZZ7-1"/>
</dbReference>
<dbReference type="RefSeq" id="NP_083007.2">
    <molecule id="Q3TZZ7-1"/>
    <property type="nucleotide sequence ID" value="NM_028731.5"/>
</dbReference>
<dbReference type="RefSeq" id="XP_017170617.1">
    <property type="nucleotide sequence ID" value="XM_017315128.1"/>
</dbReference>
<dbReference type="SMR" id="Q3TZZ7"/>
<dbReference type="BioGRID" id="206705">
    <property type="interactions" value="8"/>
</dbReference>
<dbReference type="FunCoup" id="Q3TZZ7">
    <property type="interactions" value="2978"/>
</dbReference>
<dbReference type="IntAct" id="Q3TZZ7">
    <property type="interactions" value="1"/>
</dbReference>
<dbReference type="MINT" id="Q3TZZ7"/>
<dbReference type="STRING" id="10090.ENSMUSP00000098548"/>
<dbReference type="GlyGen" id="Q3TZZ7">
    <property type="glycosylation" value="3 sites, 1 O-linked glycan (2 sites)"/>
</dbReference>
<dbReference type="iPTMnet" id="Q3TZZ7"/>
<dbReference type="PhosphoSitePlus" id="Q3TZZ7"/>
<dbReference type="SwissPalm" id="Q3TZZ7"/>
<dbReference type="jPOST" id="Q3TZZ7"/>
<dbReference type="PaxDb" id="10090-ENSMUSP00000098548"/>
<dbReference type="PeptideAtlas" id="Q3TZZ7"/>
<dbReference type="ProteomicsDB" id="275482">
    <molecule id="Q3TZZ7-1"/>
</dbReference>
<dbReference type="ProteomicsDB" id="275483">
    <molecule id="Q3TZZ7-2"/>
</dbReference>
<dbReference type="Pumba" id="Q3TZZ7"/>
<dbReference type="Antibodypedia" id="950">
    <property type="antibodies" value="104 antibodies from 21 providers"/>
</dbReference>
<dbReference type="Ensembl" id="ENSMUST00000100986.4">
    <molecule id="Q3TZZ7-1"/>
    <property type="protein sequence ID" value="ENSMUSP00000098548.3"/>
    <property type="gene ID" value="ENSMUSG00000021171.9"/>
</dbReference>
<dbReference type="Ensembl" id="ENSMUST00000220816.2">
    <molecule id="Q3TZZ7-1"/>
    <property type="protein sequence ID" value="ENSMUSP00000152444.2"/>
    <property type="gene ID" value="ENSMUSG00000021171.9"/>
</dbReference>
<dbReference type="GeneID" id="52635"/>
<dbReference type="KEGG" id="mmu:52635"/>
<dbReference type="UCSC" id="uc007pho.1">
    <molecule id="Q3TZZ7-1"/>
    <property type="organism name" value="mouse"/>
</dbReference>
<dbReference type="UCSC" id="uc007phq.1">
    <molecule id="Q3TZZ7-2"/>
    <property type="organism name" value="mouse"/>
</dbReference>
<dbReference type="AGR" id="MGI:1261845"/>
<dbReference type="CTD" id="57488"/>
<dbReference type="MGI" id="MGI:1261845">
    <property type="gene designation" value="Esyt2"/>
</dbReference>
<dbReference type="VEuPathDB" id="HostDB:ENSMUSG00000021171"/>
<dbReference type="eggNOG" id="KOG1012">
    <property type="taxonomic scope" value="Eukaryota"/>
</dbReference>
<dbReference type="GeneTree" id="ENSGT00940000156086"/>
<dbReference type="HOGENOM" id="CLU_012047_0_0_1"/>
<dbReference type="InParanoid" id="Q3TZZ7"/>
<dbReference type="OMA" id="CEAPVFI"/>
<dbReference type="OrthoDB" id="1029639at2759"/>
<dbReference type="PhylomeDB" id="Q3TZZ7"/>
<dbReference type="TreeFam" id="TF324255"/>
<dbReference type="Reactome" id="R-MMU-9845576">
    <property type="pathway name" value="Glycosphingolipid transport"/>
</dbReference>
<dbReference type="BioGRID-ORCS" id="52635">
    <property type="hits" value="2 hits in 79 CRISPR screens"/>
</dbReference>
<dbReference type="ChiTaRS" id="Esyt2">
    <property type="organism name" value="mouse"/>
</dbReference>
<dbReference type="PRO" id="PR:Q3TZZ7"/>
<dbReference type="Proteomes" id="UP000000589">
    <property type="component" value="Chromosome 12"/>
</dbReference>
<dbReference type="RNAct" id="Q3TZZ7">
    <property type="molecule type" value="protein"/>
</dbReference>
<dbReference type="Bgee" id="ENSMUSG00000021171">
    <property type="expression patterns" value="Expressed in dorsal pancreas and 227 other cell types or tissues"/>
</dbReference>
<dbReference type="ExpressionAtlas" id="Q3TZZ7">
    <property type="expression patterns" value="baseline and differential"/>
</dbReference>
<dbReference type="GO" id="GO:0009898">
    <property type="term" value="C:cytoplasmic side of plasma membrane"/>
    <property type="evidence" value="ECO:0000250"/>
    <property type="project" value="UniProtKB"/>
</dbReference>
<dbReference type="GO" id="GO:0005829">
    <property type="term" value="C:cytosol"/>
    <property type="evidence" value="ECO:0007669"/>
    <property type="project" value="Ensembl"/>
</dbReference>
<dbReference type="GO" id="GO:0005789">
    <property type="term" value="C:endoplasmic reticulum membrane"/>
    <property type="evidence" value="ECO:0000250"/>
    <property type="project" value="UniProtKB"/>
</dbReference>
<dbReference type="GO" id="GO:0140268">
    <property type="term" value="C:endoplasmic reticulum-plasma membrane contact site"/>
    <property type="evidence" value="ECO:0000250"/>
    <property type="project" value="UniProtKB"/>
</dbReference>
<dbReference type="GO" id="GO:0044232">
    <property type="term" value="C:organelle membrane contact site"/>
    <property type="evidence" value="ECO:0000250"/>
    <property type="project" value="UniProtKB"/>
</dbReference>
<dbReference type="GO" id="GO:0005509">
    <property type="term" value="F:calcium ion binding"/>
    <property type="evidence" value="ECO:0000250"/>
    <property type="project" value="UniProtKB"/>
</dbReference>
<dbReference type="GO" id="GO:0031210">
    <property type="term" value="F:phosphatidylcholine binding"/>
    <property type="evidence" value="ECO:0000250"/>
    <property type="project" value="UniProtKB"/>
</dbReference>
<dbReference type="GO" id="GO:0008429">
    <property type="term" value="F:phosphatidylethanolamine binding"/>
    <property type="evidence" value="ECO:0000250"/>
    <property type="project" value="UniProtKB"/>
</dbReference>
<dbReference type="GO" id="GO:0035091">
    <property type="term" value="F:phosphatidylinositol binding"/>
    <property type="evidence" value="ECO:0000250"/>
    <property type="project" value="UniProtKB"/>
</dbReference>
<dbReference type="GO" id="GO:0006897">
    <property type="term" value="P:endocytosis"/>
    <property type="evidence" value="ECO:0007669"/>
    <property type="project" value="UniProtKB-KW"/>
</dbReference>
<dbReference type="GO" id="GO:0061817">
    <property type="term" value="P:endoplasmic reticulum-plasma membrane tethering"/>
    <property type="evidence" value="ECO:0007669"/>
    <property type="project" value="InterPro"/>
</dbReference>
<dbReference type="GO" id="GO:0006869">
    <property type="term" value="P:lipid transport"/>
    <property type="evidence" value="ECO:0007669"/>
    <property type="project" value="UniProtKB-KW"/>
</dbReference>
<dbReference type="CDD" id="cd08391">
    <property type="entry name" value="C2A_C2C_Synaptotagmin_like"/>
    <property type="match status" value="1"/>
</dbReference>
<dbReference type="CDD" id="cd04050">
    <property type="entry name" value="C2B_Synaptotagmin-like"/>
    <property type="match status" value="1"/>
</dbReference>
<dbReference type="CDD" id="cd04030">
    <property type="entry name" value="C2C_KIAA1228"/>
    <property type="match status" value="1"/>
</dbReference>
<dbReference type="CDD" id="cd21680">
    <property type="entry name" value="SMP_ESyt2"/>
    <property type="match status" value="1"/>
</dbReference>
<dbReference type="FunFam" id="2.60.40.150:FF:000025">
    <property type="entry name" value="Extended synaptotagmin 2"/>
    <property type="match status" value="1"/>
</dbReference>
<dbReference type="FunFam" id="2.60.40.150:FF:000078">
    <property type="entry name" value="Extended synaptotagmin 2"/>
    <property type="match status" value="1"/>
</dbReference>
<dbReference type="FunFam" id="2.60.40.150:FF:000091">
    <property type="entry name" value="Extended synaptotagmin 2"/>
    <property type="match status" value="1"/>
</dbReference>
<dbReference type="Gene3D" id="2.60.40.150">
    <property type="entry name" value="C2 domain"/>
    <property type="match status" value="3"/>
</dbReference>
<dbReference type="InterPro" id="IPR000008">
    <property type="entry name" value="C2_dom"/>
</dbReference>
<dbReference type="InterPro" id="IPR035892">
    <property type="entry name" value="C2_domain_sf"/>
</dbReference>
<dbReference type="InterPro" id="IPR037752">
    <property type="entry name" value="C2C_KIAA1228"/>
</dbReference>
<dbReference type="InterPro" id="IPR037733">
    <property type="entry name" value="Ext_Synaptotagmin_C2A"/>
</dbReference>
<dbReference type="InterPro" id="IPR037749">
    <property type="entry name" value="Ext_Synaptotagmin_C2B"/>
</dbReference>
<dbReference type="InterPro" id="IPR051634">
    <property type="entry name" value="Extended_Synaptotagmin"/>
</dbReference>
<dbReference type="InterPro" id="IPR031468">
    <property type="entry name" value="SMP_LBD"/>
</dbReference>
<dbReference type="InterPro" id="IPR039010">
    <property type="entry name" value="Synaptotagmin_SMP"/>
</dbReference>
<dbReference type="PANTHER" id="PTHR45761:SF2">
    <property type="entry name" value="EXTENDED SYNAPTOTAGMIN-2"/>
    <property type="match status" value="1"/>
</dbReference>
<dbReference type="PANTHER" id="PTHR45761">
    <property type="entry name" value="EXTENDED SYNAPTOTAGMIN-LIKE PROTEIN 2, ISOFORM C"/>
    <property type="match status" value="1"/>
</dbReference>
<dbReference type="Pfam" id="PF00168">
    <property type="entry name" value="C2"/>
    <property type="match status" value="3"/>
</dbReference>
<dbReference type="Pfam" id="PF17047">
    <property type="entry name" value="SMP_LBD"/>
    <property type="match status" value="1"/>
</dbReference>
<dbReference type="SMART" id="SM00239">
    <property type="entry name" value="C2"/>
    <property type="match status" value="3"/>
</dbReference>
<dbReference type="SUPFAM" id="SSF49562">
    <property type="entry name" value="C2 domain (Calcium/lipid-binding domain, CaLB)"/>
    <property type="match status" value="3"/>
</dbReference>
<dbReference type="PROSITE" id="PS50004">
    <property type="entry name" value="C2"/>
    <property type="match status" value="3"/>
</dbReference>
<dbReference type="PROSITE" id="PS51847">
    <property type="entry name" value="SMP"/>
    <property type="match status" value="1"/>
</dbReference>
<proteinExistence type="evidence at protein level"/>
<accession>Q3TZZ7</accession>
<accession>B2RSN5</accession>
<accession>Q9D5Y7</accession>
<feature type="chain" id="PRO_0000278259" description="Extended synaptotagmin-2">
    <location>
        <begin position="1"/>
        <end position="845"/>
    </location>
</feature>
<feature type="topological domain" description="Cytoplasmic" evidence="3">
    <location>
        <begin position="1"/>
        <end position="27"/>
    </location>
</feature>
<feature type="transmembrane region" description="Helical" evidence="3">
    <location>
        <begin position="28"/>
        <end position="48"/>
    </location>
</feature>
<feature type="topological domain" description="Lumenal" evidence="3">
    <location>
        <begin position="49"/>
        <end position="51"/>
    </location>
</feature>
<feature type="transmembrane region" description="Helical" evidence="3">
    <location>
        <begin position="52"/>
        <end position="72"/>
    </location>
</feature>
<feature type="topological domain" description="Cytoplasmic" evidence="3">
    <location>
        <begin position="73"/>
        <end position="845"/>
    </location>
</feature>
<feature type="domain" description="SMP-LTD" evidence="5">
    <location>
        <begin position="115"/>
        <end position="294"/>
    </location>
</feature>
<feature type="domain" description="C2 1" evidence="4">
    <location>
        <begin position="293"/>
        <end position="413"/>
    </location>
</feature>
<feature type="domain" description="C2 2" evidence="4">
    <location>
        <begin position="442"/>
        <end position="563"/>
    </location>
</feature>
<feature type="domain" description="C2 3" evidence="4">
    <location>
        <begin position="710"/>
        <end position="832"/>
    </location>
</feature>
<feature type="region of interest" description="Disordered" evidence="6">
    <location>
        <begin position="1"/>
        <end position="26"/>
    </location>
</feature>
<feature type="region of interest" description="Disordered" evidence="6">
    <location>
        <begin position="584"/>
        <end position="664"/>
    </location>
</feature>
<feature type="region of interest" description="Required for phosphatidylinositol 4,5-bisphosphate-dependent location at the cell membrane" evidence="1">
    <location>
        <begin position="757"/>
        <end position="764"/>
    </location>
</feature>
<feature type="compositionally biased region" description="Gly residues" evidence="6">
    <location>
        <begin position="1"/>
        <end position="17"/>
    </location>
</feature>
<feature type="compositionally biased region" description="Polar residues" evidence="6">
    <location>
        <begin position="612"/>
        <end position="628"/>
    </location>
</feature>
<feature type="compositionally biased region" description="Basic and acidic residues" evidence="6">
    <location>
        <begin position="634"/>
        <end position="645"/>
    </location>
</feature>
<feature type="binding site" evidence="1">
    <location>
        <position position="324"/>
    </location>
    <ligand>
        <name>Ca(2+)</name>
        <dbReference type="ChEBI" id="CHEBI:29108"/>
        <label>1</label>
    </ligand>
</feature>
<feature type="binding site" evidence="1">
    <location>
        <position position="325"/>
    </location>
    <ligand>
        <name>Ca(2+)</name>
        <dbReference type="ChEBI" id="CHEBI:29108"/>
        <label>1</label>
    </ligand>
</feature>
<feature type="binding site" evidence="1">
    <location>
        <position position="325"/>
    </location>
    <ligand>
        <name>Ca(2+)</name>
        <dbReference type="ChEBI" id="CHEBI:29108"/>
        <label>2</label>
    </ligand>
</feature>
<feature type="binding site" evidence="1">
    <location>
        <position position="337"/>
    </location>
    <ligand>
        <name>Ca(2+)</name>
        <dbReference type="ChEBI" id="CHEBI:29108"/>
        <label>2</label>
    </ligand>
</feature>
<feature type="binding site" evidence="1">
    <location>
        <position position="384"/>
    </location>
    <ligand>
        <name>Ca(2+)</name>
        <dbReference type="ChEBI" id="CHEBI:29108"/>
        <label>1</label>
    </ligand>
</feature>
<feature type="binding site" evidence="1">
    <location>
        <position position="384"/>
    </location>
    <ligand>
        <name>Ca(2+)</name>
        <dbReference type="ChEBI" id="CHEBI:29108"/>
        <label>2</label>
    </ligand>
</feature>
<feature type="binding site" evidence="1">
    <location>
        <position position="385"/>
    </location>
    <ligand>
        <name>Ca(2+)</name>
        <dbReference type="ChEBI" id="CHEBI:29108"/>
        <label>2</label>
    </ligand>
</feature>
<feature type="binding site" evidence="1">
    <location>
        <position position="386"/>
    </location>
    <ligand>
        <name>Ca(2+)</name>
        <dbReference type="ChEBI" id="CHEBI:29108"/>
        <label>1</label>
    </ligand>
</feature>
<feature type="binding site" evidence="1">
    <location>
        <position position="386"/>
    </location>
    <ligand>
        <name>Ca(2+)</name>
        <dbReference type="ChEBI" id="CHEBI:29108"/>
        <label>2</label>
    </ligand>
</feature>
<feature type="binding site" evidence="1">
    <location>
        <position position="386"/>
    </location>
    <ligand>
        <name>Ca(2+)</name>
        <dbReference type="ChEBI" id="CHEBI:29108"/>
        <label>3</label>
    </ligand>
</feature>
<feature type="binding site" evidence="1">
    <location>
        <position position="388"/>
    </location>
    <ligand>
        <name>Ca(2+)</name>
        <dbReference type="ChEBI" id="CHEBI:29108"/>
        <label>3</label>
    </ligand>
</feature>
<feature type="binding site" evidence="1">
    <location>
        <position position="390"/>
    </location>
    <ligand>
        <name>Ca(2+)</name>
        <dbReference type="ChEBI" id="CHEBI:29108"/>
        <label>3</label>
    </ligand>
</feature>
<feature type="binding site" evidence="1">
    <location>
        <position position="391"/>
    </location>
    <ligand>
        <name>Ca(2+)</name>
        <dbReference type="ChEBI" id="CHEBI:29108"/>
        <label>1</label>
    </ligand>
</feature>
<feature type="modified residue" description="Phosphoserine" evidence="2">
    <location>
        <position position="615"/>
    </location>
</feature>
<feature type="modified residue" description="Phosphoserine" evidence="2">
    <location>
        <position position="617"/>
    </location>
</feature>
<feature type="modified residue" description="Phosphothreonine" evidence="2">
    <location>
        <position position="629"/>
    </location>
</feature>
<feature type="modified residue" description="Phosphoserine" evidence="12">
    <location>
        <position position="660"/>
    </location>
</feature>
<feature type="modified residue" description="Phosphoserine" evidence="11 12">
    <location>
        <position position="662"/>
    </location>
</feature>
<feature type="modified residue" description="Phosphoserine" evidence="12">
    <location>
        <position position="663"/>
    </location>
</feature>
<feature type="modified residue" description="Phosphoserine" evidence="12">
    <location>
        <position position="667"/>
    </location>
</feature>
<feature type="modified residue" description="Phosphoserine" evidence="12">
    <location>
        <position position="679"/>
    </location>
</feature>
<feature type="modified residue" description="Phosphoserine" evidence="11 12">
    <location>
        <position position="682"/>
    </location>
</feature>
<feature type="modified residue" description="Phosphoserine" evidence="10 11 12">
    <location>
        <position position="685"/>
    </location>
</feature>
<feature type="splice variant" id="VSP_023243" description="In isoform 2." evidence="7 8">
    <location>
        <begin position="1"/>
        <end position="487"/>
    </location>
</feature>
<keyword id="KW-0025">Alternative splicing</keyword>
<keyword id="KW-0106">Calcium</keyword>
<keyword id="KW-1003">Cell membrane</keyword>
<keyword id="KW-0254">Endocytosis</keyword>
<keyword id="KW-0256">Endoplasmic reticulum</keyword>
<keyword id="KW-0445">Lipid transport</keyword>
<keyword id="KW-0446">Lipid-binding</keyword>
<keyword id="KW-0472">Membrane</keyword>
<keyword id="KW-0479">Metal-binding</keyword>
<keyword id="KW-0597">Phosphoprotein</keyword>
<keyword id="KW-1185">Reference proteome</keyword>
<keyword id="KW-0677">Repeat</keyword>
<keyword id="KW-0812">Transmembrane</keyword>
<keyword id="KW-1133">Transmembrane helix</keyword>
<keyword id="KW-0813">Transport</keyword>
<protein>
    <recommendedName>
        <fullName>Extended synaptotagmin-2</fullName>
        <shortName>E-Syt2</shortName>
    </recommendedName>
</protein>
<comment type="function">
    <text evidence="2">Tethers the endoplasmic reticulum to the cell membrane and promotes the formation of appositions between the endoplasmic reticulum and the cell membrane. Binds glycerophospholipids in a barrel-like domain and may play a role in cellular lipid transport. Plays a role in FGF signaling via its role in the rapid internalization of FGFR1 that has been activated by FGF1 binding; this occurs most likely via the AP-2 complex (By similarity). Promotes the localization of SACM1L at endoplasmic reticulum-plasma membrane contact sites (EPCS) (By similarity).</text>
</comment>
<comment type="subunit">
    <text evidence="1">Homodimer. Interacts with ESYT1 and ESYT3. Interacts with FGFR1 that has been activated by FGF1 binding. Interacts with the AP-2 complex; identified in a complex with the AP-2 complex and FGFR1 (By similarity).</text>
</comment>
<comment type="subcellular location">
    <subcellularLocation>
        <location evidence="2">Cell membrane</location>
        <topology evidence="2">Peripheral membrane protein</topology>
    </subcellularLocation>
    <subcellularLocation>
        <location evidence="2">Endoplasmic reticulum membrane</location>
        <topology evidence="3">Multi-pass membrane protein</topology>
    </subcellularLocation>
    <text evidence="2">Localizes to endoplasmic reticulum-plasma membrane contact sites (EPCS). Recruited to the cell membrane via the third C2 domain (By similarity).</text>
</comment>
<comment type="alternative products">
    <event type="alternative splicing"/>
    <isoform>
        <id>Q3TZZ7-1</id>
        <name>1</name>
        <sequence type="displayed"/>
    </isoform>
    <isoform>
        <id>Q3TZZ7-2</id>
        <name>2</name>
        <sequence type="described" ref="VSP_023243"/>
    </isoform>
</comment>
<comment type="domain">
    <text evidence="1">Anchored to the endoplasmic reticulum membrane by a transmembrane hairpin structure; both N-terminus and C-terminus are cytoplasmic.</text>
</comment>
<comment type="domain">
    <text evidence="1">The C2 domains mediate lipid and calcium binding. The N-terminal C2 domain binds calcium ions and is important for calcium-dependent lipid binding and interaction with membranes. Two calcium ions are bound at a high-affinity site and a third calcium ion is bound with lower affinity. May bind up to four calcium ions. In contrast, the second C2 domain apparently does not bind calcium. The third C2 domain mediates interaction with membranes enriched in phosphatidylinositol 4,5-bisphosphate and is required for location at the cell membrane (By similarity).</text>
</comment>
<comment type="domain">
    <text evidence="2">The SMP-LTD domain is a barrel-like domain that binds glycerophospholipids in its interior; can bind two lipid molecules simultaneously. Binds a variety of lipids, including phosphatidylethanolamine, phosphatidylcholine and phosphatidylinositol (By similarity).</text>
</comment>
<comment type="similarity">
    <text evidence="9">Belongs to the extended synaptotagmin family.</text>
</comment>
<sequence length="845" mass="94139">MSSAGGEGPEAGPGRAGGRSEPEAPGSALSVDLPGLLGQLARSFALLLPVYALGYLGLSFSWVLLALGLLAWCRRSRGLKASRLCRALALLEDEEQAVRLGVRACDLPAWVHFPDTERAEWLNKTVKHMWPFICQFIEKLFRETIEPAVRGANAHLSTFSFTKVDVGQQPLRVNGVKVYTENVDKRQIILDLQISFVGNCEIDLEIKRYFCRAGVKSIQIHGTMRVILEPLIGDMPLVGALSIFFLRKPLLEINWTGLTNLLDIPGLNGLSDTIILDIISNYLVLPNRITVPLVSEVQIAQLRFPIPKGVLRIHFIEAQDLQGKDTYLKGLVKGKSDPYGIIRVGNQIFQSKVIKENLSPKWNEVYEALVYEHPGQELEIELFDEDPDKDDFLGSLMIDLIEVEKERLLDEWFTLDEVPKGKLHLKLEWLTLMPDAANLDKVLADIRADKDQASDGLSSALLILYLDSARNLPSGKKINSNPNPLVQMSVGHKAQESKIRYKTSEPVWEENFTFFIHNPRRQDLEVEVKDEQHQCSLGSLRIPLSQLLTSDNMTINQRFQLSNSGPNSTLKMKIALRVLHLEKQERPPDYQHSAQVKRPSVSKEGRKMPIKSQMSASPGTGGANTAPSTPVMGVDDKPAMEEKPQPPEASPLGHRDLGRSSSSLLASPSHIAAKEPTPSIASDISLPIATQELRQRLRQLENGTTLGQSPLGQIQLTIRHSSQRNKLIVVVHSCRNLIAFSEDGSDPYVRMYLLPDKRRSGRRKTHVSKKTLNPVFDQSFDFSVSLPEVQRRTLDVAVKNSGGFLSKDKGLLGKVLVVLASEELAKGWTQWYDLTEDGTRPQVIT</sequence>
<evidence type="ECO:0000250" key="1"/>
<evidence type="ECO:0000250" key="2">
    <source>
        <dbReference type="UniProtKB" id="A0FGR8"/>
    </source>
</evidence>
<evidence type="ECO:0000255" key="3"/>
<evidence type="ECO:0000255" key="4">
    <source>
        <dbReference type="PROSITE-ProRule" id="PRU00041"/>
    </source>
</evidence>
<evidence type="ECO:0000255" key="5">
    <source>
        <dbReference type="PROSITE-ProRule" id="PRU01194"/>
    </source>
</evidence>
<evidence type="ECO:0000256" key="6">
    <source>
        <dbReference type="SAM" id="MobiDB-lite"/>
    </source>
</evidence>
<evidence type="ECO:0000303" key="7">
    <source>
    </source>
</evidence>
<evidence type="ECO:0000303" key="8">
    <source>
    </source>
</evidence>
<evidence type="ECO:0000305" key="9"/>
<evidence type="ECO:0007744" key="10">
    <source>
    </source>
</evidence>
<evidence type="ECO:0007744" key="11">
    <source>
    </source>
</evidence>
<evidence type="ECO:0007744" key="12">
    <source>
    </source>
</evidence>
<name>ESYT2_MOUSE</name>
<gene>
    <name type="primary">Esyt2</name>
    <name type="synonym">D12Ertd551e</name>
    <name type="synonym">Fam62b</name>
</gene>
<organism>
    <name type="scientific">Mus musculus</name>
    <name type="common">Mouse</name>
    <dbReference type="NCBI Taxonomy" id="10090"/>
    <lineage>
        <taxon>Eukaryota</taxon>
        <taxon>Metazoa</taxon>
        <taxon>Chordata</taxon>
        <taxon>Craniata</taxon>
        <taxon>Vertebrata</taxon>
        <taxon>Euteleostomi</taxon>
        <taxon>Mammalia</taxon>
        <taxon>Eutheria</taxon>
        <taxon>Euarchontoglires</taxon>
        <taxon>Glires</taxon>
        <taxon>Rodentia</taxon>
        <taxon>Myomorpha</taxon>
        <taxon>Muroidea</taxon>
        <taxon>Muridae</taxon>
        <taxon>Murinae</taxon>
        <taxon>Mus</taxon>
        <taxon>Mus</taxon>
    </lineage>
</organism>
<reference key="1">
    <citation type="journal article" date="2005" name="Science">
        <title>The transcriptional landscape of the mammalian genome.</title>
        <authorList>
            <person name="Carninci P."/>
            <person name="Kasukawa T."/>
            <person name="Katayama S."/>
            <person name="Gough J."/>
            <person name="Frith M.C."/>
            <person name="Maeda N."/>
            <person name="Oyama R."/>
            <person name="Ravasi T."/>
            <person name="Lenhard B."/>
            <person name="Wells C."/>
            <person name="Kodzius R."/>
            <person name="Shimokawa K."/>
            <person name="Bajic V.B."/>
            <person name="Brenner S.E."/>
            <person name="Batalov S."/>
            <person name="Forrest A.R."/>
            <person name="Zavolan M."/>
            <person name="Davis M.J."/>
            <person name="Wilming L.G."/>
            <person name="Aidinis V."/>
            <person name="Allen J.E."/>
            <person name="Ambesi-Impiombato A."/>
            <person name="Apweiler R."/>
            <person name="Aturaliya R.N."/>
            <person name="Bailey T.L."/>
            <person name="Bansal M."/>
            <person name="Baxter L."/>
            <person name="Beisel K.W."/>
            <person name="Bersano T."/>
            <person name="Bono H."/>
            <person name="Chalk A.M."/>
            <person name="Chiu K.P."/>
            <person name="Choudhary V."/>
            <person name="Christoffels A."/>
            <person name="Clutterbuck D.R."/>
            <person name="Crowe M.L."/>
            <person name="Dalla E."/>
            <person name="Dalrymple B.P."/>
            <person name="de Bono B."/>
            <person name="Della Gatta G."/>
            <person name="di Bernardo D."/>
            <person name="Down T."/>
            <person name="Engstrom P."/>
            <person name="Fagiolini M."/>
            <person name="Faulkner G."/>
            <person name="Fletcher C.F."/>
            <person name="Fukushima T."/>
            <person name="Furuno M."/>
            <person name="Futaki S."/>
            <person name="Gariboldi M."/>
            <person name="Georgii-Hemming P."/>
            <person name="Gingeras T.R."/>
            <person name="Gojobori T."/>
            <person name="Green R.E."/>
            <person name="Gustincich S."/>
            <person name="Harbers M."/>
            <person name="Hayashi Y."/>
            <person name="Hensch T.K."/>
            <person name="Hirokawa N."/>
            <person name="Hill D."/>
            <person name="Huminiecki L."/>
            <person name="Iacono M."/>
            <person name="Ikeo K."/>
            <person name="Iwama A."/>
            <person name="Ishikawa T."/>
            <person name="Jakt M."/>
            <person name="Kanapin A."/>
            <person name="Katoh M."/>
            <person name="Kawasawa Y."/>
            <person name="Kelso J."/>
            <person name="Kitamura H."/>
            <person name="Kitano H."/>
            <person name="Kollias G."/>
            <person name="Krishnan S.P."/>
            <person name="Kruger A."/>
            <person name="Kummerfeld S.K."/>
            <person name="Kurochkin I.V."/>
            <person name="Lareau L.F."/>
            <person name="Lazarevic D."/>
            <person name="Lipovich L."/>
            <person name="Liu J."/>
            <person name="Liuni S."/>
            <person name="McWilliam S."/>
            <person name="Madan Babu M."/>
            <person name="Madera M."/>
            <person name="Marchionni L."/>
            <person name="Matsuda H."/>
            <person name="Matsuzawa S."/>
            <person name="Miki H."/>
            <person name="Mignone F."/>
            <person name="Miyake S."/>
            <person name="Morris K."/>
            <person name="Mottagui-Tabar S."/>
            <person name="Mulder N."/>
            <person name="Nakano N."/>
            <person name="Nakauchi H."/>
            <person name="Ng P."/>
            <person name="Nilsson R."/>
            <person name="Nishiguchi S."/>
            <person name="Nishikawa S."/>
            <person name="Nori F."/>
            <person name="Ohara O."/>
            <person name="Okazaki Y."/>
            <person name="Orlando V."/>
            <person name="Pang K.C."/>
            <person name="Pavan W.J."/>
            <person name="Pavesi G."/>
            <person name="Pesole G."/>
            <person name="Petrovsky N."/>
            <person name="Piazza S."/>
            <person name="Reed J."/>
            <person name="Reid J.F."/>
            <person name="Ring B.Z."/>
            <person name="Ringwald M."/>
            <person name="Rost B."/>
            <person name="Ruan Y."/>
            <person name="Salzberg S.L."/>
            <person name="Sandelin A."/>
            <person name="Schneider C."/>
            <person name="Schoenbach C."/>
            <person name="Sekiguchi K."/>
            <person name="Semple C.A."/>
            <person name="Seno S."/>
            <person name="Sessa L."/>
            <person name="Sheng Y."/>
            <person name="Shibata Y."/>
            <person name="Shimada H."/>
            <person name="Shimada K."/>
            <person name="Silva D."/>
            <person name="Sinclair B."/>
            <person name="Sperling S."/>
            <person name="Stupka E."/>
            <person name="Sugiura K."/>
            <person name="Sultana R."/>
            <person name="Takenaka Y."/>
            <person name="Taki K."/>
            <person name="Tammoja K."/>
            <person name="Tan S.L."/>
            <person name="Tang S."/>
            <person name="Taylor M.S."/>
            <person name="Tegner J."/>
            <person name="Teichmann S.A."/>
            <person name="Ueda H.R."/>
            <person name="van Nimwegen E."/>
            <person name="Verardo R."/>
            <person name="Wei C.L."/>
            <person name="Yagi K."/>
            <person name="Yamanishi H."/>
            <person name="Zabarovsky E."/>
            <person name="Zhu S."/>
            <person name="Zimmer A."/>
            <person name="Hide W."/>
            <person name="Bult C."/>
            <person name="Grimmond S.M."/>
            <person name="Teasdale R.D."/>
            <person name="Liu E.T."/>
            <person name="Brusic V."/>
            <person name="Quackenbush J."/>
            <person name="Wahlestedt C."/>
            <person name="Mattick J.S."/>
            <person name="Hume D.A."/>
            <person name="Kai C."/>
            <person name="Sasaki D."/>
            <person name="Tomaru Y."/>
            <person name="Fukuda S."/>
            <person name="Kanamori-Katayama M."/>
            <person name="Suzuki M."/>
            <person name="Aoki J."/>
            <person name="Arakawa T."/>
            <person name="Iida J."/>
            <person name="Imamura K."/>
            <person name="Itoh M."/>
            <person name="Kato T."/>
            <person name="Kawaji H."/>
            <person name="Kawagashira N."/>
            <person name="Kawashima T."/>
            <person name="Kojima M."/>
            <person name="Kondo S."/>
            <person name="Konno H."/>
            <person name="Nakano K."/>
            <person name="Ninomiya N."/>
            <person name="Nishio T."/>
            <person name="Okada M."/>
            <person name="Plessy C."/>
            <person name="Shibata K."/>
            <person name="Shiraki T."/>
            <person name="Suzuki S."/>
            <person name="Tagami M."/>
            <person name="Waki K."/>
            <person name="Watahiki A."/>
            <person name="Okamura-Oho Y."/>
            <person name="Suzuki H."/>
            <person name="Kawai J."/>
            <person name="Hayashizaki Y."/>
        </authorList>
    </citation>
    <scope>NUCLEOTIDE SEQUENCE [LARGE SCALE MRNA] (ISOFORMS 1 AND 2)</scope>
    <source>
        <strain>C57BL/6J</strain>
        <strain>NOD</strain>
        <tissue>Retina</tissue>
        <tissue>Testis</tissue>
    </source>
</reference>
<reference key="2">
    <citation type="journal article" date="2004" name="Genome Res.">
        <title>The status, quality, and expansion of the NIH full-length cDNA project: the Mammalian Gene Collection (MGC).</title>
        <authorList>
            <consortium name="The MGC Project Team"/>
        </authorList>
    </citation>
    <scope>NUCLEOTIDE SEQUENCE [LARGE SCALE MRNA] (ISOFORMS 1 AND 2)</scope>
    <source>
        <strain>C57BL/6J</strain>
        <tissue>Brain</tissue>
    </source>
</reference>
<reference key="3">
    <citation type="journal article" date="2007" name="Proc. Natl. Acad. Sci. U.S.A.">
        <title>Large-scale phosphorylation analysis of mouse liver.</title>
        <authorList>
            <person name="Villen J."/>
            <person name="Beausoleil S.A."/>
            <person name="Gerber S.A."/>
            <person name="Gygi S.P."/>
        </authorList>
    </citation>
    <scope>PHOSPHORYLATION [LARGE SCALE ANALYSIS] AT SER-685</scope>
    <scope>IDENTIFICATION BY MASS SPECTROMETRY [LARGE SCALE ANALYSIS]</scope>
    <source>
        <tissue>Liver</tissue>
    </source>
</reference>
<reference key="4">
    <citation type="journal article" date="2008" name="FEBS Lett.">
        <title>Structural characterization of soluble E-Syt2.</title>
        <authorList>
            <person name="Groer G.J."/>
            <person name="Haslbeck M."/>
            <person name="Roessle M."/>
            <person name="Gessner A."/>
        </authorList>
    </citation>
    <scope>CALCIUM-BINDING</scope>
</reference>
<reference key="5">
    <citation type="journal article" date="2009" name="Immunity">
        <title>The phagosomal proteome in interferon-gamma-activated macrophages.</title>
        <authorList>
            <person name="Trost M."/>
            <person name="English L."/>
            <person name="Lemieux S."/>
            <person name="Courcelles M."/>
            <person name="Desjardins M."/>
            <person name="Thibault P."/>
        </authorList>
    </citation>
    <scope>PHOSPHORYLATION [LARGE SCALE ANALYSIS] AT SER-662; SER-682 AND SER-685</scope>
    <scope>IDENTIFICATION BY MASS SPECTROMETRY [LARGE SCALE ANALYSIS]</scope>
</reference>
<reference key="6">
    <citation type="journal article" date="2010" name="Cell">
        <title>A tissue-specific atlas of mouse protein phosphorylation and expression.</title>
        <authorList>
            <person name="Huttlin E.L."/>
            <person name="Jedrychowski M.P."/>
            <person name="Elias J.E."/>
            <person name="Goswami T."/>
            <person name="Rad R."/>
            <person name="Beausoleil S.A."/>
            <person name="Villen J."/>
            <person name="Haas W."/>
            <person name="Sowa M.E."/>
            <person name="Gygi S.P."/>
        </authorList>
    </citation>
    <scope>PHOSPHORYLATION [LARGE SCALE ANALYSIS] AT SER-660; SER-662; SER-663; SER-667; SER-679; SER-682 AND SER-685</scope>
    <scope>IDENTIFICATION BY MASS SPECTROMETRY [LARGE SCALE ANALYSIS]</scope>
    <source>
        <tissue>Brain</tissue>
        <tissue>Brown adipose tissue</tissue>
        <tissue>Heart</tissue>
        <tissue>Kidney</tissue>
        <tissue>Liver</tissue>
        <tissue>Lung</tissue>
        <tissue>Pancreas</tissue>
        <tissue>Spleen</tissue>
        <tissue>Testis</tissue>
    </source>
</reference>